<name>TPM1_CAEEL</name>
<evidence type="ECO:0000256" key="1">
    <source>
        <dbReference type="SAM" id="MobiDB-lite"/>
    </source>
</evidence>
<evidence type="ECO:0000269" key="2">
    <source>
    </source>
</evidence>
<evidence type="ECO:0000269" key="3">
    <source>
    </source>
</evidence>
<evidence type="ECO:0000269" key="4">
    <source>
    </source>
</evidence>
<evidence type="ECO:0000269" key="5">
    <source>
    </source>
</evidence>
<evidence type="ECO:0000269" key="6">
    <source>
    </source>
</evidence>
<evidence type="ECO:0000269" key="7">
    <source>
    </source>
</evidence>
<evidence type="ECO:0000303" key="8">
    <source>
    </source>
</evidence>
<evidence type="ECO:0000305" key="9"/>
<reference key="1">
    <citation type="journal article" date="1995" name="J. Mol. Biol.">
        <title>Genome structure, mapping and expression of the tropomyosin gene tmy-1 of Caenorhabditis elegans.</title>
        <authorList>
            <person name="Kagawa H."/>
            <person name="Sugimoto K."/>
            <person name="Matsumoto H."/>
            <person name="Inoue T."/>
            <person name="Imadzu H."/>
            <person name="Takuwa K."/>
            <person name="Sakube Y."/>
        </authorList>
    </citation>
    <scope>NUCLEOTIDE SEQUENCE [GENOMIC DNA / MRNA] (ISOFORMS A AND D)</scope>
    <scope>TISSUE SPECIFICITY</scope>
    <source>
        <strain>Bristol N2</strain>
    </source>
</reference>
<reference key="2">
    <citation type="journal article" date="1998" name="Science">
        <title>Genome sequence of the nematode C. elegans: a platform for investigating biology.</title>
        <authorList>
            <consortium name="The C. elegans sequencing consortium"/>
        </authorList>
    </citation>
    <scope>NUCLEOTIDE SEQUENCE [LARGE SCALE GENOMIC DNA]</scope>
    <scope>ALTERNATIVE SPLICING</scope>
    <source>
        <strain>Bristol N2</strain>
    </source>
</reference>
<reference key="3">
    <citation type="journal article" date="1997" name="Cell Struct. Funct.">
        <title>Mutations and expressions of the tropomyosin gene and the troponin C gene of Caenorhabditis elegans.</title>
        <authorList>
            <person name="Kagawa H."/>
            <person name="Takuwa K."/>
            <person name="Sakube Y."/>
        </authorList>
    </citation>
    <scope>FUNCTION</scope>
    <scope>MUTAGENESIS OF GLU-234</scope>
</reference>
<reference key="4">
    <citation type="journal article" date="2002" name="J. Cell Biol.">
        <title>Tropomyosin inhibits ADF/cofilin-dependent actin filament dynamics.</title>
        <authorList>
            <person name="Ono S."/>
            <person name="Ono K."/>
        </authorList>
    </citation>
    <scope>FUNCTION</scope>
    <scope>SUBCELLULAR LOCATION</scope>
    <scope>TISSUE SPECIFICITY</scope>
</reference>
<reference key="5">
    <citation type="journal article" date="2002" name="J. Cell Biol.">
        <authorList>
            <person name="Ono S."/>
            <person name="Ono K."/>
        </authorList>
    </citation>
    <scope>ERRATUM OF PUBMED:11901171</scope>
</reference>
<reference key="6">
    <citation type="journal article" date="2005" name="Development">
        <title>Muscle arm development in Caenorhabditis elegans.</title>
        <authorList>
            <person name="Dixon S.J."/>
            <person name="Roy P.J."/>
        </authorList>
    </citation>
    <scope>FUNCTION</scope>
    <scope>DISRUPTION PHENOTYPE</scope>
</reference>
<reference key="7">
    <citation type="journal article" date="2006" name="J. Neurosci.">
        <title>Integration of male mating and feeding behaviors in Caenorhabditis elegans.</title>
        <authorList>
            <person name="Gruninger T.R."/>
            <person name="Gualberto D.G."/>
            <person name="LeBoeuf B."/>
            <person name="Garcia L.R."/>
        </authorList>
    </citation>
    <scope>FUNCTION</scope>
    <scope>MUTAGENESIS OF GLU-139 AND GLU-222</scope>
</reference>
<reference key="8">
    <citation type="journal article" date="2007" name="J. Cell Sci.">
        <title>UNC-87, a calponin-related protein in C. elegans, antagonizes ADF/cofilin-mediated actin filament dynamics.</title>
        <authorList>
            <person name="Yamashiro S."/>
            <person name="Gimona M."/>
            <person name="Ono S."/>
        </authorList>
    </citation>
    <scope>FUNCTION</scope>
    <scope>SUBCELLULAR LOCATION</scope>
    <scope>TISSUE SPECIFICITY</scope>
    <scope>DISRUPTION PHENOTYPE</scope>
</reference>
<proteinExistence type="evidence at protein level"/>
<accession>Q22866</accession>
<accession>Q22865</accession>
<accession>Q27284</accession>
<accession>Q7K6W7</accession>
<accession>Q95Q31</accession>
<feature type="chain" id="PRO_0000205645" description="Tropomyosin isoforms a/b/d/f">
    <location>
        <begin position="1"/>
        <end position="284"/>
    </location>
</feature>
<feature type="region of interest" description="Disordered" evidence="1">
    <location>
        <begin position="40"/>
        <end position="78"/>
    </location>
</feature>
<feature type="coiled-coil region">
    <location>
        <begin position="1"/>
        <end position="284"/>
    </location>
</feature>
<feature type="splice variant" id="VSP_020645" description="In isoform b." evidence="9">
    <location>
        <begin position="1"/>
        <end position="91"/>
    </location>
</feature>
<feature type="splice variant" id="VSP_020646" description="In isoform f." evidence="9">
    <original>ERAEERLKIATEKLEEATHNVDESERVRKVMENRSLQDEERANTVEAQLKEA</original>
    <variation>NFSPRRLTANTTRSPVSSPWLKLILRELRSVPRPERTRSWSLKRSCASLVIT</variation>
    <location>
        <begin position="100"/>
        <end position="151"/>
    </location>
</feature>
<feature type="splice variant" id="VSP_020647" description="In isoform f." evidence="9">
    <location>
        <begin position="152"/>
        <end position="284"/>
    </location>
</feature>
<feature type="splice variant" id="VSP_009425" description="In isoform b and isoform d." evidence="8">
    <original>DELVHEKERYKTISEELDSTFQELSGY</original>
    <variation>ELRDAEVLKARQLQDELDHMVQELNSV</variation>
    <location>
        <begin position="258"/>
        <end position="284"/>
    </location>
</feature>
<feature type="mutagenesis site" description="In lev-11-sy558; induces spicule protraction (Prc phenotype). Prc phenotype is suppressible by food deprivation." evidence="4">
    <original>E</original>
    <variation>K</variation>
    <location>
        <position position="139"/>
    </location>
</feature>
<feature type="mutagenesis site" description="In lev-11-rg1; disrupts most steps of male mating behavior except spicule insertion." evidence="4">
    <original>E</original>
    <variation>K</variation>
    <location>
        <position position="222"/>
    </location>
</feature>
<feature type="mutagenesis site" description="In lev-11-x12; confers levamisole resistance." evidence="7">
    <original>E</original>
    <variation>K</variation>
    <location>
        <position position="234"/>
    </location>
</feature>
<feature type="sequence conflict" description="In Ref. 1; BAA07540." evidence="9" ref="1">
    <original>TFQ</original>
    <variation>NLP</variation>
    <location>
        <begin position="277"/>
        <end position="279"/>
    </location>
</feature>
<dbReference type="EMBL" id="D38539">
    <property type="protein sequence ID" value="BAA07540.1"/>
    <property type="molecule type" value="Genomic_DNA"/>
</dbReference>
<dbReference type="EMBL" id="D38539">
    <property type="protein sequence ID" value="BAA07541.1"/>
    <property type="molecule type" value="Genomic_DNA"/>
</dbReference>
<dbReference type="EMBL" id="D38540">
    <property type="protein sequence ID" value="BAA07543.1"/>
    <property type="molecule type" value="mRNA"/>
</dbReference>
<dbReference type="EMBL" id="D38541">
    <property type="protein sequence ID" value="BAA07544.1"/>
    <property type="molecule type" value="mRNA"/>
</dbReference>
<dbReference type="EMBL" id="AL132877">
    <property type="protein sequence ID" value="CAC70112.1"/>
    <property type="molecule type" value="Genomic_DNA"/>
</dbReference>
<dbReference type="EMBL" id="AL132877">
    <property type="protein sequence ID" value="CAC70113.2"/>
    <property type="molecule type" value="Genomic_DNA"/>
</dbReference>
<dbReference type="EMBL" id="AL132877">
    <property type="protein sequence ID" value="CAC70114.1"/>
    <property type="molecule type" value="Genomic_DNA"/>
</dbReference>
<dbReference type="EMBL" id="AL132877">
    <property type="protein sequence ID" value="CAE54913.1"/>
    <property type="molecule type" value="Genomic_DNA"/>
</dbReference>
<dbReference type="PIR" id="S58921">
    <property type="entry name" value="S58921"/>
</dbReference>
<dbReference type="PIR" id="S58922">
    <property type="entry name" value="S58922"/>
</dbReference>
<dbReference type="RefSeq" id="NP_001021695.1">
    <molecule id="Q22866-1"/>
    <property type="nucleotide sequence ID" value="NM_001026524.8"/>
</dbReference>
<dbReference type="RefSeq" id="NP_001021696.1">
    <property type="nucleotide sequence ID" value="NM_001026525.5"/>
</dbReference>
<dbReference type="RefSeq" id="NP_001021698.1">
    <property type="nucleotide sequence ID" value="NM_001026527.1"/>
</dbReference>
<dbReference type="RefSeq" id="NP_001021700.1">
    <property type="nucleotide sequence ID" value="NM_001026529.4"/>
</dbReference>
<dbReference type="RefSeq" id="NP_001367007.1">
    <molecule id="Q22866-3"/>
    <property type="nucleotide sequence ID" value="NM_001381263.2"/>
</dbReference>
<dbReference type="RefSeq" id="NP_001367087.1">
    <molecule id="Q22866-4"/>
    <property type="nucleotide sequence ID" value="NM_001381266.2"/>
</dbReference>
<dbReference type="RefSeq" id="NP_001370127.1">
    <molecule id="Q22866-2"/>
    <property type="nucleotide sequence ID" value="NM_001383761.2"/>
</dbReference>
<dbReference type="SMR" id="Q22866"/>
<dbReference type="BioGRID" id="38704">
    <property type="interactions" value="64"/>
</dbReference>
<dbReference type="DIP" id="DIP-27403N"/>
<dbReference type="FunCoup" id="Q22866">
    <property type="interactions" value="165"/>
</dbReference>
<dbReference type="IntAct" id="Q22866">
    <property type="interactions" value="47"/>
</dbReference>
<dbReference type="STRING" id="6239.Y105E8B.1d.1"/>
<dbReference type="iPTMnet" id="Q22866"/>
<dbReference type="PaxDb" id="6239-Y105E8B.1a"/>
<dbReference type="PeptideAtlas" id="Q22866"/>
<dbReference type="EnsemblMetazoa" id="Y105E8B.1a.1">
    <molecule id="Q22866-1"/>
    <property type="protein sequence ID" value="Y105E8B.1a.1"/>
    <property type="gene ID" value="WBGene00002978"/>
</dbReference>
<dbReference type="EnsemblMetazoa" id="Y105E8B.1b.1">
    <molecule id="Q22866-3"/>
    <property type="protein sequence ID" value="Y105E8B.1b.1"/>
    <property type="gene ID" value="WBGene00002978"/>
</dbReference>
<dbReference type="EnsemblMetazoa" id="Y105E8B.1d.1">
    <molecule id="Q22866-2"/>
    <property type="protein sequence ID" value="Y105E8B.1d.1"/>
    <property type="gene ID" value="WBGene00002978"/>
</dbReference>
<dbReference type="EnsemblMetazoa" id="Y105E8B.1f.1">
    <molecule id="Q22866-4"/>
    <property type="protein sequence ID" value="Y105E8B.1f.1"/>
    <property type="gene ID" value="WBGene00002978"/>
</dbReference>
<dbReference type="GeneID" id="173319"/>
<dbReference type="KEGG" id="cel:CELE_Y105E8B.1"/>
<dbReference type="UCSC" id="Y105E8B.1e.2">
    <molecule id="Q22866-1"/>
    <property type="organism name" value="c. elegans"/>
</dbReference>
<dbReference type="AGR" id="WB:WBGene00002978"/>
<dbReference type="CTD" id="173319"/>
<dbReference type="WormBase" id="Y105E8B.1a">
    <molecule id="Q22866-1"/>
    <property type="protein sequence ID" value="CE28782"/>
    <property type="gene ID" value="WBGene00002978"/>
    <property type="gene designation" value="lev-11"/>
</dbReference>
<dbReference type="WormBase" id="Y105E8B.1b">
    <molecule id="Q22866-3"/>
    <property type="protein sequence ID" value="CE36223"/>
    <property type="gene ID" value="WBGene00002978"/>
    <property type="gene designation" value="lev-11"/>
</dbReference>
<dbReference type="WormBase" id="Y105E8B.1d">
    <molecule id="Q22866-2"/>
    <property type="protein sequence ID" value="CE29060"/>
    <property type="gene ID" value="WBGene00002978"/>
    <property type="gene designation" value="lev-11"/>
</dbReference>
<dbReference type="WormBase" id="Y105E8B.1f">
    <molecule id="Q22866-4"/>
    <property type="protein sequence ID" value="CE36224"/>
    <property type="gene ID" value="WBGene00002978"/>
    <property type="gene designation" value="lev-11"/>
</dbReference>
<dbReference type="eggNOG" id="KOG1003">
    <property type="taxonomic scope" value="Eukaryota"/>
</dbReference>
<dbReference type="HOGENOM" id="CLU_055027_0_2_1"/>
<dbReference type="InParanoid" id="Q22866"/>
<dbReference type="OrthoDB" id="128924at2759"/>
<dbReference type="PhylomeDB" id="Q22866"/>
<dbReference type="Reactome" id="R-CEL-445355">
    <property type="pathway name" value="Smooth Muscle Contraction"/>
</dbReference>
<dbReference type="Reactome" id="R-CEL-9013424">
    <property type="pathway name" value="RHOV GTPase cycle"/>
</dbReference>
<dbReference type="SignaLink" id="Q22866"/>
<dbReference type="Proteomes" id="UP000001940">
    <property type="component" value="Chromosome I"/>
</dbReference>
<dbReference type="Bgee" id="WBGene00002978">
    <property type="expression patterns" value="Expressed in larva and 4 other cell types or tissues"/>
</dbReference>
<dbReference type="ExpressionAtlas" id="Q22866">
    <property type="expression patterns" value="baseline and differential"/>
</dbReference>
<dbReference type="GO" id="GO:0005884">
    <property type="term" value="C:actin filament"/>
    <property type="evidence" value="ECO:0000318"/>
    <property type="project" value="GO_Central"/>
</dbReference>
<dbReference type="GO" id="GO:0005737">
    <property type="term" value="C:cytoplasm"/>
    <property type="evidence" value="ECO:0000314"/>
    <property type="project" value="UniProtKB"/>
</dbReference>
<dbReference type="GO" id="GO:0031674">
    <property type="term" value="C:I band"/>
    <property type="evidence" value="ECO:0007669"/>
    <property type="project" value="UniProtKB-SubCell"/>
</dbReference>
<dbReference type="GO" id="GO:0005865">
    <property type="term" value="C:striated muscle thin filament"/>
    <property type="evidence" value="ECO:0000314"/>
    <property type="project" value="WormBase"/>
</dbReference>
<dbReference type="GO" id="GO:0051015">
    <property type="term" value="F:actin filament binding"/>
    <property type="evidence" value="ECO:0000314"/>
    <property type="project" value="UniProtKB"/>
</dbReference>
<dbReference type="GO" id="GO:0007015">
    <property type="term" value="P:actin filament organization"/>
    <property type="evidence" value="ECO:0000315"/>
    <property type="project" value="UniProtKB"/>
</dbReference>
<dbReference type="GO" id="GO:0040011">
    <property type="term" value="P:locomotion"/>
    <property type="evidence" value="ECO:0000315"/>
    <property type="project" value="UniProtKB"/>
</dbReference>
<dbReference type="GO" id="GO:0006936">
    <property type="term" value="P:muscle contraction"/>
    <property type="evidence" value="ECO:0000318"/>
    <property type="project" value="GO_Central"/>
</dbReference>
<dbReference type="GO" id="GO:0030835">
    <property type="term" value="P:negative regulation of actin filament depolymerization"/>
    <property type="evidence" value="ECO:0000314"/>
    <property type="project" value="WormBase"/>
</dbReference>
<dbReference type="GO" id="GO:0030833">
    <property type="term" value="P:regulation of actin filament polymerization"/>
    <property type="evidence" value="ECO:0000314"/>
    <property type="project" value="WormBase"/>
</dbReference>
<dbReference type="GO" id="GO:0006937">
    <property type="term" value="P:regulation of muscle contraction"/>
    <property type="evidence" value="ECO:0000315"/>
    <property type="project" value="UniProtKB"/>
</dbReference>
<dbReference type="GO" id="GO:0034609">
    <property type="term" value="P:spicule insertion"/>
    <property type="evidence" value="ECO:0000315"/>
    <property type="project" value="UniProtKB"/>
</dbReference>
<dbReference type="FunFam" id="1.20.5.170:FF:000005">
    <property type="entry name" value="Tropomyosin alpha-1 chain"/>
    <property type="match status" value="1"/>
</dbReference>
<dbReference type="FunFam" id="1.20.5.170:FF:000001">
    <property type="entry name" value="Tropomyosin alpha-1 chain isoform 1"/>
    <property type="match status" value="1"/>
</dbReference>
<dbReference type="FunFam" id="1.20.5.340:FF:000001">
    <property type="entry name" value="Tropomyosin alpha-1 chain isoform 2"/>
    <property type="match status" value="1"/>
</dbReference>
<dbReference type="Gene3D" id="1.20.5.170">
    <property type="match status" value="2"/>
</dbReference>
<dbReference type="Gene3D" id="1.20.5.340">
    <property type="match status" value="1"/>
</dbReference>
<dbReference type="InterPro" id="IPR000533">
    <property type="entry name" value="Tropomyosin"/>
</dbReference>
<dbReference type="PANTHER" id="PTHR19269">
    <property type="entry name" value="TROPOMYOSIN"/>
    <property type="match status" value="1"/>
</dbReference>
<dbReference type="Pfam" id="PF00261">
    <property type="entry name" value="Tropomyosin"/>
    <property type="match status" value="1"/>
</dbReference>
<dbReference type="PRINTS" id="PR00194">
    <property type="entry name" value="TROPOMYOSIN"/>
</dbReference>
<dbReference type="SUPFAM" id="SSF57997">
    <property type="entry name" value="Tropomyosin"/>
    <property type="match status" value="1"/>
</dbReference>
<dbReference type="PROSITE" id="PS00326">
    <property type="entry name" value="TROPOMYOSIN"/>
    <property type="match status" value="1"/>
</dbReference>
<comment type="function">
    <text evidence="2 3 4 5 7">Tropomyosin, in association with the troponin complex, plays a central role in the calcium dependent regulation of muscle contraction (PubMed:11901171, PubMed:9113409). Involved in muscle actin filament organization and muscle arm extension and morphology (PubMed:15930100). Protects actin filaments from depolymerization by unc-60 in vitro (PubMed:17684058). Also has a role in male mating behavior by regulating the copulatory spicules (PubMed:16399684). Binds to F-actin (PubMed:11901171).</text>
</comment>
<comment type="subcellular location">
    <subcellularLocation>
        <location evidence="2">Cytoplasm</location>
    </subcellularLocation>
    <subcellularLocation>
        <location evidence="5">Cytoplasm</location>
        <location evidence="5">Myofibril</location>
        <location evidence="5">Sarcomere</location>
        <location evidence="5">I band</location>
    </subcellularLocation>
</comment>
<comment type="alternative products">
    <event type="alternative splicing"/>
    <isoform>
        <id>Q22866-1</id>
        <name>a</name>
        <name>CeTM1</name>
        <name>CeTMI</name>
        <sequence type="displayed"/>
    </isoform>
    <isoform>
        <id>Q22866-3</id>
        <name>b</name>
        <sequence type="described" ref="VSP_020645 VSP_009425"/>
    </isoform>
    <isoform>
        <id>Q22866-2</id>
        <name>d</name>
        <name>CeTM2</name>
        <name>CeTMII</name>
        <sequence type="described" ref="VSP_009425"/>
    </isoform>
    <isoform>
        <id>Q22866-4</id>
        <name>f</name>
        <sequence type="described" ref="VSP_020646 VSP_020647"/>
    </isoform>
    <isoform>
        <id>Q27249-1</id>
        <name>e</name>
        <name>CeTM3</name>
        <name>CeTMIII</name>
        <sequence type="external"/>
    </isoform>
    <isoform>
        <id>Q27249-2</id>
        <name>c</name>
        <name>CeTM4</name>
        <name>CeTMIV</name>
        <sequence type="external"/>
    </isoform>
</comment>
<comment type="tissue specificity">
    <text evidence="2 5 6">Isoform a and isoform d are expressed in body wall muscles, vulva, anus muscles and male tail muscles (PubMed:7666414). Located to the myofibrils of thin actin filaments (PubMed:11901171, PubMed:17684058).</text>
</comment>
<comment type="domain">
    <text>The molecule is in a coiled coil structure that is formed by 2 polypeptide chains. The sequence exhibits a prominent seven-residues periodicity.</text>
</comment>
<comment type="disruption phenotype">
    <text evidence="3 5">Worms have 50-75% embryonic lethality (PubMed:15930100). Those that survive body wall interference have abnormal body morphology and uncoordinated movements, and those that survive pharynx interference have deformed pharynges and gut regions (PubMed:15930100). RNAi-mediated knockdown results in a wavy appearance of the actin filaments in adult body wall muscles (PubMed:17684058).</text>
</comment>
<comment type="similarity">
    <text evidence="9">Belongs to the tropomyosin family.</text>
</comment>
<organism>
    <name type="scientific">Caenorhabditis elegans</name>
    <dbReference type="NCBI Taxonomy" id="6239"/>
    <lineage>
        <taxon>Eukaryota</taxon>
        <taxon>Metazoa</taxon>
        <taxon>Ecdysozoa</taxon>
        <taxon>Nematoda</taxon>
        <taxon>Chromadorea</taxon>
        <taxon>Rhabditida</taxon>
        <taxon>Rhabditina</taxon>
        <taxon>Rhabditomorpha</taxon>
        <taxon>Rhabditoidea</taxon>
        <taxon>Rhabditidae</taxon>
        <taxon>Peloderinae</taxon>
        <taxon>Caenorhabditis</taxon>
    </lineage>
</organism>
<sequence length="284" mass="33004">MDAIKKKMQAMKIEKDNALDRADAAEEKVRQITEKLERVEEELRDTQKKMTQTGDDLDKAQEDLSAATSKLEEKEKTVQEAEAEVASLNRRMTLLEEELERAEERLKIATEKLEEATHNVDESERVRKVMENRSLQDEERANTVEAQLKEAQLLAEEADRKYDEVARKLAMVEADLERAEERAEAGENKIVELEEELRVVGNNLKSLEVSEEKALQREDSYEEQIRTVSSRLKEAETRAEFAERSVQKLQKEVDRLEDELVHEKERYKTISEELDSTFQELSGY</sequence>
<protein>
    <recommendedName>
        <fullName>Tropomyosin isoforms a/b/d/f</fullName>
    </recommendedName>
    <alternativeName>
        <fullName>Levamisole resistant protein 11</fullName>
    </alternativeName>
</protein>
<gene>
    <name type="primary">lev-11</name>
    <name type="synonym">tmy-1</name>
    <name type="ORF">Y105E8B.1</name>
</gene>
<keyword id="KW-0009">Actin-binding</keyword>
<keyword id="KW-0025">Alternative splicing</keyword>
<keyword id="KW-0175">Coiled coil</keyword>
<keyword id="KW-0963">Cytoplasm</keyword>
<keyword id="KW-0514">Muscle protein</keyword>
<keyword id="KW-1185">Reference proteome</keyword>